<keyword id="KW-0210">Decarboxylase</keyword>
<keyword id="KW-0444">Lipid biosynthesis</keyword>
<keyword id="KW-0443">Lipid metabolism</keyword>
<keyword id="KW-0456">Lyase</keyword>
<keyword id="KW-0472">Membrane</keyword>
<keyword id="KW-0496">Mitochondrion</keyword>
<keyword id="KW-0999">Mitochondrion inner membrane</keyword>
<keyword id="KW-0594">Phospholipid biosynthesis</keyword>
<keyword id="KW-1208">Phospholipid metabolism</keyword>
<keyword id="KW-0670">Pyruvate</keyword>
<keyword id="KW-1185">Reference proteome</keyword>
<keyword id="KW-0809">Transit peptide</keyword>
<keyword id="KW-0812">Transmembrane</keyword>
<keyword id="KW-1133">Transmembrane helix</keyword>
<keyword id="KW-0865">Zymogen</keyword>
<comment type="function">
    <text evidence="1">Catalyzes the formation of phosphatidylethanolamine (PtdEtn) from phosphatidylserine (PtdSer). Plays a central role in phospholipid metabolism and in the interorganelle trafficking of phosphatidylserine.</text>
</comment>
<comment type="catalytic activity">
    <reaction evidence="1">
        <text>a 1,2-diacyl-sn-glycero-3-phospho-L-serine + H(+) = a 1,2-diacyl-sn-glycero-3-phosphoethanolamine + CO2</text>
        <dbReference type="Rhea" id="RHEA:20828"/>
        <dbReference type="ChEBI" id="CHEBI:15378"/>
        <dbReference type="ChEBI" id="CHEBI:16526"/>
        <dbReference type="ChEBI" id="CHEBI:57262"/>
        <dbReference type="ChEBI" id="CHEBI:64612"/>
        <dbReference type="EC" id="4.1.1.65"/>
    </reaction>
</comment>
<comment type="cofactor">
    <cofactor evidence="1">
        <name>pyruvate</name>
        <dbReference type="ChEBI" id="CHEBI:15361"/>
    </cofactor>
    <text evidence="1">Binds 1 pyruvoyl group covalently per subunit.</text>
</comment>
<comment type="pathway">
    <text evidence="1">Phospholipid metabolism; phosphatidylethanolamine biosynthesis; phosphatidylethanolamine from CDP-diacylglycerol: step 2/2.</text>
</comment>
<comment type="subunit">
    <text evidence="1">Heterodimer of a large membrane-associated beta subunit and a small pyruvoyl-containing alpha subunit.</text>
</comment>
<comment type="subcellular location">
    <molecule>Phosphatidylserine decarboxylase 1 beta chain</molecule>
    <subcellularLocation>
        <location evidence="1">Mitochondrion inner membrane</location>
        <topology evidence="1">Single-pass membrane protein</topology>
        <orientation evidence="1">Intermembrane side</orientation>
    </subcellularLocation>
</comment>
<comment type="subcellular location">
    <molecule>Phosphatidylserine decarboxylase 1 alpha chain</molecule>
    <subcellularLocation>
        <location evidence="1">Mitochondrion inner membrane</location>
        <topology evidence="1">Peripheral membrane protein</topology>
        <orientation evidence="1">Intermembrane side</orientation>
    </subcellularLocation>
    <text evidence="1">Anchored to the mitochondrial inner membrane through its interaction with the integral membrane beta chain.</text>
</comment>
<comment type="PTM">
    <text evidence="1">Is synthesized initially as an inactive proenzyme. Formation of the active enzyme involves a self-maturation process in which the active site pyruvoyl group is generated from an internal serine residue via an autocatalytic post-translational modification. Two non-identical subunits are generated from the proenzyme in this reaction, and the pyruvate is formed at the N-terminus of the alpha chain, which is derived from the carboxyl end of the proenzyme. The autoendoproteolytic cleavage occurs by a canonical serine protease mechanism, in which the side chain hydroxyl group of the serine supplies its oxygen atom to form the C-terminus of the beta chain, while the remainder of the serine residue undergoes an oxidative deamination to produce ammonia and the pyruvoyl prosthetic group on the alpha chain. During this reaction, the Ser that is part of the protease active site of the proenzyme becomes the pyruvoyl prosthetic group, which constitutes an essential element of the active site of the mature decarboxylase.</text>
</comment>
<comment type="similarity">
    <text evidence="1">Belongs to the phosphatidylserine decarboxylase family. PSD-B subfamily. Eukaryotic type I sub-subfamily.</text>
</comment>
<gene>
    <name type="primary">PSD1</name>
    <name type="ordered locus">Os03g0101900</name>
    <name type="ordered locus">LOC_Os03g01216</name>
</gene>
<protein>
    <recommendedName>
        <fullName evidence="1">Phosphatidylserine decarboxylase proenzyme 1, mitochondrial</fullName>
        <ecNumber evidence="1">4.1.1.65</ecNumber>
    </recommendedName>
    <component>
        <recommendedName>
            <fullName evidence="1">Phosphatidylserine decarboxylase 1 beta chain</fullName>
        </recommendedName>
    </component>
    <component>
        <recommendedName>
            <fullName evidence="1">Phosphatidylserine decarboxylase 1 alpha chain</fullName>
        </recommendedName>
    </component>
</protein>
<organism>
    <name type="scientific">Oryza sativa subsp. japonica</name>
    <name type="common">Rice</name>
    <dbReference type="NCBI Taxonomy" id="39947"/>
    <lineage>
        <taxon>Eukaryota</taxon>
        <taxon>Viridiplantae</taxon>
        <taxon>Streptophyta</taxon>
        <taxon>Embryophyta</taxon>
        <taxon>Tracheophyta</taxon>
        <taxon>Spermatophyta</taxon>
        <taxon>Magnoliopsida</taxon>
        <taxon>Liliopsida</taxon>
        <taxon>Poales</taxon>
        <taxon>Poaceae</taxon>
        <taxon>BOP clade</taxon>
        <taxon>Oryzoideae</taxon>
        <taxon>Oryzeae</taxon>
        <taxon>Oryzinae</taxon>
        <taxon>Oryza</taxon>
        <taxon>Oryza sativa</taxon>
    </lineage>
</organism>
<proteinExistence type="evidence at transcript level"/>
<accession>Q10T43</accession>
<accession>A0A0P0VRT9</accession>
<feature type="transit peptide" description="Mitochondrion" evidence="1">
    <location>
        <begin position="1"/>
        <end position="21"/>
    </location>
</feature>
<feature type="chain" id="PRO_0000429520" description="Phosphatidylserine decarboxylase proenzyme 1, mitochondrial">
    <location>
        <begin position="22"/>
        <end position="438"/>
    </location>
</feature>
<feature type="chain" id="PRO_0000429521" description="Phosphatidylserine decarboxylase 1 beta chain" evidence="1">
    <location>
        <begin position="22"/>
        <end position="386"/>
    </location>
</feature>
<feature type="chain" id="PRO_0000429522" description="Phosphatidylserine decarboxylase 1 alpha chain" evidence="1">
    <location>
        <begin position="387"/>
        <end position="438"/>
    </location>
</feature>
<feature type="topological domain" description="Mitochondrial matrix" evidence="1">
    <location>
        <begin position="22"/>
        <end position="48"/>
    </location>
</feature>
<feature type="transmembrane region" description="Helical" evidence="1">
    <location>
        <begin position="49"/>
        <end position="67"/>
    </location>
</feature>
<feature type="topological domain" description="Mitochondrial intermembrane" evidence="1">
    <location>
        <begin position="68"/>
        <end position="438"/>
    </location>
</feature>
<feature type="active site" description="Charge relay system; for autoendoproteolytic cleavage activity" evidence="1">
    <location>
        <position position="173"/>
    </location>
</feature>
<feature type="active site" description="Charge relay system; for autoendoproteolytic cleavage activity" evidence="1">
    <location>
        <position position="273"/>
    </location>
</feature>
<feature type="active site" description="Charge relay system; for autoendoproteolytic cleavage activity" evidence="1">
    <location>
        <position position="387"/>
    </location>
</feature>
<feature type="active site" description="Schiff-base intermediate with substrate; via pyruvic acid; for decarboxylase activity" evidence="1">
    <location>
        <position position="387"/>
    </location>
</feature>
<feature type="site" description="Cleavage (non-hydrolytic); by autocatalysis" evidence="1">
    <location>
        <begin position="386"/>
        <end position="387"/>
    </location>
</feature>
<feature type="modified residue" description="Pyruvic acid (Ser); by autocatalysis" evidence="1">
    <location>
        <position position="387"/>
    </location>
</feature>
<name>PSD1_ORYSJ</name>
<dbReference type="EC" id="4.1.1.65" evidence="1"/>
<dbReference type="EMBL" id="DP000009">
    <property type="protein sequence ID" value="ABF93486.1"/>
    <property type="molecule type" value="Genomic_DNA"/>
</dbReference>
<dbReference type="EMBL" id="AP008209">
    <property type="protein sequence ID" value="BAF10572.1"/>
    <property type="molecule type" value="Genomic_DNA"/>
</dbReference>
<dbReference type="EMBL" id="AP014959">
    <property type="protein sequence ID" value="BAS81828.1"/>
    <property type="molecule type" value="Genomic_DNA"/>
</dbReference>
<dbReference type="EMBL" id="AK072180">
    <property type="protein sequence ID" value="BAG92859.1"/>
    <property type="molecule type" value="mRNA"/>
</dbReference>
<dbReference type="RefSeq" id="XP_015631994.1">
    <property type="nucleotide sequence ID" value="XM_015776508.1"/>
</dbReference>
<dbReference type="SMR" id="Q10T43"/>
<dbReference type="FunCoup" id="Q10T43">
    <property type="interactions" value="1575"/>
</dbReference>
<dbReference type="STRING" id="39947.Q10T43"/>
<dbReference type="PaxDb" id="39947-Q10T43"/>
<dbReference type="EnsemblPlants" id="Os03t0101900-01">
    <property type="protein sequence ID" value="Os03t0101900-01"/>
    <property type="gene ID" value="Os03g0101900"/>
</dbReference>
<dbReference type="EnsemblPlants" id="Os03t0101900-02">
    <property type="protein sequence ID" value="Os03t0101900-02"/>
    <property type="gene ID" value="Os03g0101900"/>
</dbReference>
<dbReference type="Gramene" id="Os03t0101900-01">
    <property type="protein sequence ID" value="Os03t0101900-01"/>
    <property type="gene ID" value="Os03g0101900"/>
</dbReference>
<dbReference type="Gramene" id="Os03t0101900-02">
    <property type="protein sequence ID" value="Os03t0101900-02"/>
    <property type="gene ID" value="Os03g0101900"/>
</dbReference>
<dbReference type="KEGG" id="dosa:Os03g0101900"/>
<dbReference type="eggNOG" id="KOG2420">
    <property type="taxonomic scope" value="Eukaryota"/>
</dbReference>
<dbReference type="HOGENOM" id="CLU_029061_3_0_1"/>
<dbReference type="InParanoid" id="Q10T43"/>
<dbReference type="OMA" id="HSPASWV"/>
<dbReference type="OrthoDB" id="4330at2759"/>
<dbReference type="PlantReactome" id="R-OSA-1119402">
    <property type="pathway name" value="Phospholipid biosynthesis I"/>
</dbReference>
<dbReference type="UniPathway" id="UPA00558">
    <property type="reaction ID" value="UER00616"/>
</dbReference>
<dbReference type="Proteomes" id="UP000000763">
    <property type="component" value="Chromosome 3"/>
</dbReference>
<dbReference type="Proteomes" id="UP000059680">
    <property type="component" value="Chromosome 3"/>
</dbReference>
<dbReference type="GO" id="GO:0005743">
    <property type="term" value="C:mitochondrial inner membrane"/>
    <property type="evidence" value="ECO:0007669"/>
    <property type="project" value="UniProtKB-SubCell"/>
</dbReference>
<dbReference type="GO" id="GO:0005739">
    <property type="term" value="C:mitochondrion"/>
    <property type="evidence" value="ECO:0000318"/>
    <property type="project" value="GO_Central"/>
</dbReference>
<dbReference type="GO" id="GO:0004609">
    <property type="term" value="F:phosphatidylserine decarboxylase activity"/>
    <property type="evidence" value="ECO:0000318"/>
    <property type="project" value="GO_Central"/>
</dbReference>
<dbReference type="GO" id="GO:0006646">
    <property type="term" value="P:phosphatidylethanolamine biosynthetic process"/>
    <property type="evidence" value="ECO:0000318"/>
    <property type="project" value="GO_Central"/>
</dbReference>
<dbReference type="GO" id="GO:0016540">
    <property type="term" value="P:protein autoprocessing"/>
    <property type="evidence" value="ECO:0007669"/>
    <property type="project" value="UniProtKB-UniRule"/>
</dbReference>
<dbReference type="HAMAP" id="MF_03208">
    <property type="entry name" value="PS_decarb_PSD_B_type1_euk"/>
    <property type="match status" value="1"/>
</dbReference>
<dbReference type="InterPro" id="IPR003817">
    <property type="entry name" value="PS_Dcarbxylase"/>
</dbReference>
<dbReference type="InterPro" id="IPR033177">
    <property type="entry name" value="PSD-B"/>
</dbReference>
<dbReference type="InterPro" id="IPR033661">
    <property type="entry name" value="PSD_type1_euk"/>
</dbReference>
<dbReference type="NCBIfam" id="TIGR00163">
    <property type="entry name" value="PS_decarb"/>
    <property type="match status" value="1"/>
</dbReference>
<dbReference type="PANTHER" id="PTHR10067">
    <property type="entry name" value="PHOSPHATIDYLSERINE DECARBOXYLASE"/>
    <property type="match status" value="1"/>
</dbReference>
<dbReference type="PANTHER" id="PTHR10067:SF6">
    <property type="entry name" value="PHOSPHATIDYLSERINE DECARBOXYLASE PROENZYME, MITOCHONDRIAL"/>
    <property type="match status" value="1"/>
</dbReference>
<dbReference type="Pfam" id="PF02666">
    <property type="entry name" value="PS_Dcarbxylase"/>
    <property type="match status" value="1"/>
</dbReference>
<sequence>MRRFRVWPPSPSPWPLLASRPCPHSHHHRSPFHASANSGARQGNFILPGATAATLVMFGILHARRMYEDQKVVERKEKGIEPEFSPDFKASFLRLLPLRSMSRLWGSLMEVELPVFMRPAIYKAWARAFHSNLQEAAMPLEEYPSLQAFFIRSLKEGSRPIDADPNCLVSPVDGKVLRLGELRGPGTMIEQVKGFSYSAASLLGASSSLHGAEEEDFSREHTEQSNPADSNAKSWWRVSVAKPKLWDQTLLSPKKGIFYCVIYLHPGDYHRVHSPVDWNIIKRRHFSGHLFPQNERAVRTIRNLYVENERVVLEGQWKEGFVAIAAIGATNVGSIKLYIEPELRTNRAGSKILNSQPEPPDDRVYEPVGTGVMVKKGEEIAGFKMGSTVVMVFEAPVVSKARWREDGSGTVTSDFDFCIKAGDRIRVGEAIGRWTSRE</sequence>
<reference key="1">
    <citation type="journal article" date="2005" name="Genome Res.">
        <title>Sequence, annotation, and analysis of synteny between rice chromosome 3 and diverged grass species.</title>
        <authorList>
            <consortium name="The rice chromosome 3 sequencing consortium"/>
            <person name="Buell C.R."/>
            <person name="Yuan Q."/>
            <person name="Ouyang S."/>
            <person name="Liu J."/>
            <person name="Zhu W."/>
            <person name="Wang A."/>
            <person name="Maiti R."/>
            <person name="Haas B."/>
            <person name="Wortman J."/>
            <person name="Pertea M."/>
            <person name="Jones K.M."/>
            <person name="Kim M."/>
            <person name="Overton L."/>
            <person name="Tsitrin T."/>
            <person name="Fadrosh D."/>
            <person name="Bera J."/>
            <person name="Weaver B."/>
            <person name="Jin S."/>
            <person name="Johri S."/>
            <person name="Reardon M."/>
            <person name="Webb K."/>
            <person name="Hill J."/>
            <person name="Moffat K."/>
            <person name="Tallon L."/>
            <person name="Van Aken S."/>
            <person name="Lewis M."/>
            <person name="Utterback T."/>
            <person name="Feldblyum T."/>
            <person name="Zismann V."/>
            <person name="Iobst S."/>
            <person name="Hsiao J."/>
            <person name="de Vazeille A.R."/>
            <person name="Salzberg S.L."/>
            <person name="White O."/>
            <person name="Fraser C.M."/>
            <person name="Yu Y."/>
            <person name="Kim H."/>
            <person name="Rambo T."/>
            <person name="Currie J."/>
            <person name="Collura K."/>
            <person name="Kernodle-Thompson S."/>
            <person name="Wei F."/>
            <person name="Kudrna K."/>
            <person name="Ammiraju J.S.S."/>
            <person name="Luo M."/>
            <person name="Goicoechea J.L."/>
            <person name="Wing R.A."/>
            <person name="Henry D."/>
            <person name="Oates R."/>
            <person name="Palmer M."/>
            <person name="Pries G."/>
            <person name="Saski C."/>
            <person name="Simmons J."/>
            <person name="Soderlund C."/>
            <person name="Nelson W."/>
            <person name="de la Bastide M."/>
            <person name="Spiegel L."/>
            <person name="Nascimento L."/>
            <person name="Huang E."/>
            <person name="Preston R."/>
            <person name="Zutavern T."/>
            <person name="Palmer L."/>
            <person name="O'Shaughnessy A."/>
            <person name="Dike S."/>
            <person name="McCombie W.R."/>
            <person name="Minx P."/>
            <person name="Cordum H."/>
            <person name="Wilson R."/>
            <person name="Jin W."/>
            <person name="Lee H.R."/>
            <person name="Jiang J."/>
            <person name="Jackson S."/>
        </authorList>
    </citation>
    <scope>NUCLEOTIDE SEQUENCE [LARGE SCALE GENOMIC DNA]</scope>
    <source>
        <strain>cv. Nipponbare</strain>
    </source>
</reference>
<reference key="2">
    <citation type="journal article" date="2005" name="Nature">
        <title>The map-based sequence of the rice genome.</title>
        <authorList>
            <consortium name="International rice genome sequencing project (IRGSP)"/>
        </authorList>
    </citation>
    <scope>NUCLEOTIDE SEQUENCE [LARGE SCALE GENOMIC DNA]</scope>
    <source>
        <strain>cv. Nipponbare</strain>
    </source>
</reference>
<reference key="3">
    <citation type="journal article" date="2008" name="Nucleic Acids Res.">
        <title>The rice annotation project database (RAP-DB): 2008 update.</title>
        <authorList>
            <consortium name="The rice annotation project (RAP)"/>
        </authorList>
    </citation>
    <scope>GENOME REANNOTATION</scope>
    <source>
        <strain>cv. Nipponbare</strain>
    </source>
</reference>
<reference key="4">
    <citation type="journal article" date="2013" name="Rice">
        <title>Improvement of the Oryza sativa Nipponbare reference genome using next generation sequence and optical map data.</title>
        <authorList>
            <person name="Kawahara Y."/>
            <person name="de la Bastide M."/>
            <person name="Hamilton J.P."/>
            <person name="Kanamori H."/>
            <person name="McCombie W.R."/>
            <person name="Ouyang S."/>
            <person name="Schwartz D.C."/>
            <person name="Tanaka T."/>
            <person name="Wu J."/>
            <person name="Zhou S."/>
            <person name="Childs K.L."/>
            <person name="Davidson R.M."/>
            <person name="Lin H."/>
            <person name="Quesada-Ocampo L."/>
            <person name="Vaillancourt B."/>
            <person name="Sakai H."/>
            <person name="Lee S.S."/>
            <person name="Kim J."/>
            <person name="Numa H."/>
            <person name="Itoh T."/>
            <person name="Buell C.R."/>
            <person name="Matsumoto T."/>
        </authorList>
    </citation>
    <scope>GENOME REANNOTATION</scope>
    <source>
        <strain>cv. Nipponbare</strain>
    </source>
</reference>
<reference key="5">
    <citation type="journal article" date="2003" name="Science">
        <title>Collection, mapping, and annotation of over 28,000 cDNA clones from japonica rice.</title>
        <authorList>
            <consortium name="The rice full-length cDNA consortium"/>
        </authorList>
    </citation>
    <scope>NUCLEOTIDE SEQUENCE [LARGE SCALE MRNA]</scope>
    <source>
        <strain>cv. Nipponbare</strain>
    </source>
</reference>
<evidence type="ECO:0000255" key="1">
    <source>
        <dbReference type="HAMAP-Rule" id="MF_03208"/>
    </source>
</evidence>